<accession>Q59088</accession>
<keyword id="KW-0963">Cytoplasm</keyword>
<keyword id="KW-0312">Gluconeogenesis</keyword>
<keyword id="KW-0324">Glycolysis</keyword>
<keyword id="KW-0413">Isomerase</keyword>
<protein>
    <recommendedName>
        <fullName evidence="1">Glucose-6-phosphate isomerase</fullName>
        <shortName evidence="1">GPI</shortName>
        <ecNumber evidence="1">5.3.1.9</ecNumber>
    </recommendedName>
    <alternativeName>
        <fullName evidence="1">Phosphoglucose isomerase</fullName>
        <shortName evidence="1">PGI</shortName>
    </alternativeName>
    <alternativeName>
        <fullName evidence="1">Phosphohexose isomerase</fullName>
        <shortName evidence="1">PHI</shortName>
    </alternativeName>
</protein>
<feature type="chain" id="PRO_0000180580" description="Glucose-6-phosphate isomerase">
    <location>
        <begin position="1"/>
        <end position="557"/>
    </location>
</feature>
<feature type="active site" description="Proton donor" evidence="1">
    <location>
        <position position="361"/>
    </location>
</feature>
<feature type="active site" evidence="1">
    <location>
        <position position="392"/>
    </location>
</feature>
<feature type="active site" evidence="1">
    <location>
        <position position="520"/>
    </location>
</feature>
<sequence length="557" mass="63280">MNKNIEQFPRKTTLTPQQKLEQLMEQHKTVHLTELFDKEQDRFAKYCVGCEDLVFDFSKQRINQPILDALVQLAESKQLNKWIDTLFSQNKINYTEQREAMHWALRLPADNQVYPELAKQVSDQLERMYQLVNKIHEGQYRGATGEVIQDVVNIGVGGSDLGPLMVSHALSDFKVKTAKPLNIRFVSTMDGSQLSDILHQLRPETTLFIVSSKSFSTIDTLSNAHTARKWLEKALGRESSILKSHFIGVSTKPDKMTEWGIHPDNQFLLWDWVGGRYSLWSCIGLPIALTIGVEGFKAFLAGAHGIDEHFRTTEFHQNIPVLMGLMGIWNTNYLNLKTHAVLPYDGRLKYFTSYLQQLEMESNGKSTQRNGQKVENTTCPIVWGEVGPNAQHAFYQLLHQGTQKVSCDFIAPMHRYNANHFTYVENADALIDQHLLALSNCLAQSRLLAFGNDALKVDQREQLPAYKQYEGNQPSTTMLLKELSPRTMGKLIALYEHKVFVQSVIWDINPFDQWGVEKGKEIANDLLPILNGESSDLSHLDDSTQGLIQFLLGKSNG</sequence>
<dbReference type="EC" id="5.3.1.9" evidence="1"/>
<dbReference type="EMBL" id="X89900">
    <property type="protein sequence ID" value="CAA61993.1"/>
    <property type="molecule type" value="Genomic_DNA"/>
</dbReference>
<dbReference type="EMBL" id="CR543861">
    <property type="protein sequence ID" value="CAG67079.1"/>
    <property type="molecule type" value="Genomic_DNA"/>
</dbReference>
<dbReference type="PIR" id="S58164">
    <property type="entry name" value="S58164"/>
</dbReference>
<dbReference type="RefSeq" id="WP_004930760.1">
    <property type="nucleotide sequence ID" value="NC_005966.1"/>
</dbReference>
<dbReference type="SMR" id="Q59088"/>
<dbReference type="STRING" id="202950.GCA_001485005_01840"/>
<dbReference type="GeneID" id="45232624"/>
<dbReference type="KEGG" id="aci:ACIAD0101"/>
<dbReference type="eggNOG" id="COG0166">
    <property type="taxonomic scope" value="Bacteria"/>
</dbReference>
<dbReference type="HOGENOM" id="CLU_017947_3_1_6"/>
<dbReference type="OrthoDB" id="140919at2"/>
<dbReference type="BioCyc" id="ASP62977:ACIAD_RS00470-MONOMER"/>
<dbReference type="UniPathway" id="UPA00109">
    <property type="reaction ID" value="UER00181"/>
</dbReference>
<dbReference type="UniPathway" id="UPA00138"/>
<dbReference type="Proteomes" id="UP000000430">
    <property type="component" value="Chromosome"/>
</dbReference>
<dbReference type="GO" id="GO:0005829">
    <property type="term" value="C:cytosol"/>
    <property type="evidence" value="ECO:0007669"/>
    <property type="project" value="TreeGrafter"/>
</dbReference>
<dbReference type="GO" id="GO:0097367">
    <property type="term" value="F:carbohydrate derivative binding"/>
    <property type="evidence" value="ECO:0007669"/>
    <property type="project" value="InterPro"/>
</dbReference>
<dbReference type="GO" id="GO:0004347">
    <property type="term" value="F:glucose-6-phosphate isomerase activity"/>
    <property type="evidence" value="ECO:0007669"/>
    <property type="project" value="UniProtKB-UniRule"/>
</dbReference>
<dbReference type="GO" id="GO:0048029">
    <property type="term" value="F:monosaccharide binding"/>
    <property type="evidence" value="ECO:0007669"/>
    <property type="project" value="TreeGrafter"/>
</dbReference>
<dbReference type="GO" id="GO:0006094">
    <property type="term" value="P:gluconeogenesis"/>
    <property type="evidence" value="ECO:0007669"/>
    <property type="project" value="UniProtKB-UniRule"/>
</dbReference>
<dbReference type="GO" id="GO:0051156">
    <property type="term" value="P:glucose 6-phosphate metabolic process"/>
    <property type="evidence" value="ECO:0007669"/>
    <property type="project" value="TreeGrafter"/>
</dbReference>
<dbReference type="GO" id="GO:0006096">
    <property type="term" value="P:glycolytic process"/>
    <property type="evidence" value="ECO:0007669"/>
    <property type="project" value="UniProtKB-UniRule"/>
</dbReference>
<dbReference type="CDD" id="cd05015">
    <property type="entry name" value="SIS_PGI_1"/>
    <property type="match status" value="1"/>
</dbReference>
<dbReference type="CDD" id="cd05016">
    <property type="entry name" value="SIS_PGI_2"/>
    <property type="match status" value="1"/>
</dbReference>
<dbReference type="Gene3D" id="1.10.1390.10">
    <property type="match status" value="1"/>
</dbReference>
<dbReference type="Gene3D" id="3.40.50.10490">
    <property type="entry name" value="Glucose-6-phosphate isomerase like protein, domain 1"/>
    <property type="match status" value="2"/>
</dbReference>
<dbReference type="HAMAP" id="MF_00473">
    <property type="entry name" value="G6P_isomerase"/>
    <property type="match status" value="1"/>
</dbReference>
<dbReference type="InterPro" id="IPR001672">
    <property type="entry name" value="G6P_Isomerase"/>
</dbReference>
<dbReference type="InterPro" id="IPR023096">
    <property type="entry name" value="G6P_Isomerase_C"/>
</dbReference>
<dbReference type="InterPro" id="IPR018189">
    <property type="entry name" value="Phosphoglucose_isomerase_CS"/>
</dbReference>
<dbReference type="InterPro" id="IPR046348">
    <property type="entry name" value="SIS_dom_sf"/>
</dbReference>
<dbReference type="InterPro" id="IPR035476">
    <property type="entry name" value="SIS_PGI_1"/>
</dbReference>
<dbReference type="InterPro" id="IPR035482">
    <property type="entry name" value="SIS_PGI_2"/>
</dbReference>
<dbReference type="NCBIfam" id="NF001211">
    <property type="entry name" value="PRK00179.1"/>
    <property type="match status" value="1"/>
</dbReference>
<dbReference type="PANTHER" id="PTHR11469">
    <property type="entry name" value="GLUCOSE-6-PHOSPHATE ISOMERASE"/>
    <property type="match status" value="1"/>
</dbReference>
<dbReference type="PANTHER" id="PTHR11469:SF1">
    <property type="entry name" value="GLUCOSE-6-PHOSPHATE ISOMERASE"/>
    <property type="match status" value="1"/>
</dbReference>
<dbReference type="Pfam" id="PF00342">
    <property type="entry name" value="PGI"/>
    <property type="match status" value="1"/>
</dbReference>
<dbReference type="PRINTS" id="PR00662">
    <property type="entry name" value="G6PISOMERASE"/>
</dbReference>
<dbReference type="SUPFAM" id="SSF53697">
    <property type="entry name" value="SIS domain"/>
    <property type="match status" value="1"/>
</dbReference>
<dbReference type="PROSITE" id="PS00765">
    <property type="entry name" value="P_GLUCOSE_ISOMERASE_1"/>
    <property type="match status" value="1"/>
</dbReference>
<dbReference type="PROSITE" id="PS00174">
    <property type="entry name" value="P_GLUCOSE_ISOMERASE_2"/>
    <property type="match status" value="1"/>
</dbReference>
<dbReference type="PROSITE" id="PS51463">
    <property type="entry name" value="P_GLUCOSE_ISOMERASE_3"/>
    <property type="match status" value="1"/>
</dbReference>
<reference key="1">
    <citation type="submission" date="1995-07" db="EMBL/GenBank/DDBJ databases">
        <authorList>
            <person name="Stark M."/>
            <person name="Kaplan N."/>
            <person name="Ron E."/>
        </authorList>
    </citation>
    <scope>NUCLEOTIDE SEQUENCE [GENOMIC DNA]</scope>
</reference>
<reference key="2">
    <citation type="journal article" date="2004" name="Nucleic Acids Res.">
        <title>Unique features revealed by the genome sequence of Acinetobacter sp. ADP1, a versatile and naturally transformation competent bacterium.</title>
        <authorList>
            <person name="Barbe V."/>
            <person name="Vallenet D."/>
            <person name="Fonknechten N."/>
            <person name="Kreimeyer A."/>
            <person name="Oztas S."/>
            <person name="Labarre L."/>
            <person name="Cruveiller S."/>
            <person name="Robert C."/>
            <person name="Duprat S."/>
            <person name="Wincker P."/>
            <person name="Ornston L.N."/>
            <person name="Weissenbach J."/>
            <person name="Marliere P."/>
            <person name="Cohen G.N."/>
            <person name="Medigue C."/>
        </authorList>
    </citation>
    <scope>NUCLEOTIDE SEQUENCE [LARGE SCALE GENOMIC DNA]</scope>
    <source>
        <strain>ATCC 33305 / BD413 / ADP1</strain>
    </source>
</reference>
<name>G6PI_ACIAD</name>
<evidence type="ECO:0000255" key="1">
    <source>
        <dbReference type="HAMAP-Rule" id="MF_00473"/>
    </source>
</evidence>
<evidence type="ECO:0000305" key="2"/>
<proteinExistence type="inferred from homology"/>
<organism>
    <name type="scientific">Acinetobacter baylyi (strain ATCC 33305 / BD413 / ADP1)</name>
    <dbReference type="NCBI Taxonomy" id="62977"/>
    <lineage>
        <taxon>Bacteria</taxon>
        <taxon>Pseudomonadati</taxon>
        <taxon>Pseudomonadota</taxon>
        <taxon>Gammaproteobacteria</taxon>
        <taxon>Moraxellales</taxon>
        <taxon>Moraxellaceae</taxon>
        <taxon>Acinetobacter</taxon>
    </lineage>
</organism>
<comment type="function">
    <text evidence="1">Catalyzes the reversible isomerization of glucose-6-phosphate to fructose-6-phosphate.</text>
</comment>
<comment type="catalytic activity">
    <reaction evidence="1">
        <text>alpha-D-glucose 6-phosphate = beta-D-fructose 6-phosphate</text>
        <dbReference type="Rhea" id="RHEA:11816"/>
        <dbReference type="ChEBI" id="CHEBI:57634"/>
        <dbReference type="ChEBI" id="CHEBI:58225"/>
        <dbReference type="EC" id="5.3.1.9"/>
    </reaction>
</comment>
<comment type="pathway">
    <text evidence="1">Carbohydrate biosynthesis; gluconeogenesis.</text>
</comment>
<comment type="pathway">
    <text evidence="1">Carbohydrate degradation; glycolysis; D-glyceraldehyde 3-phosphate and glycerone phosphate from D-glucose: step 2/4.</text>
</comment>
<comment type="subcellular location">
    <subcellularLocation>
        <location evidence="1">Cytoplasm</location>
    </subcellularLocation>
</comment>
<comment type="similarity">
    <text evidence="1 2">Belongs to the GPI family.</text>
</comment>
<gene>
    <name evidence="1" type="primary">pgi</name>
    <name type="ordered locus">ACIAD0101</name>
</gene>